<name>GATC_RHOOB</name>
<keyword id="KW-0067">ATP-binding</keyword>
<keyword id="KW-0436">Ligase</keyword>
<keyword id="KW-0547">Nucleotide-binding</keyword>
<keyword id="KW-0648">Protein biosynthesis</keyword>
<comment type="function">
    <text evidence="1">Allows the formation of correctly charged Asn-tRNA(Asn) or Gln-tRNA(Gln) through the transamidation of misacylated Asp-tRNA(Asn) or Glu-tRNA(Gln) in organisms which lack either or both of asparaginyl-tRNA or glutaminyl-tRNA synthetases. The reaction takes place in the presence of glutamine and ATP through an activated phospho-Asp-tRNA(Asn) or phospho-Glu-tRNA(Gln).</text>
</comment>
<comment type="catalytic activity">
    <reaction evidence="1">
        <text>L-glutamyl-tRNA(Gln) + L-glutamine + ATP + H2O = L-glutaminyl-tRNA(Gln) + L-glutamate + ADP + phosphate + H(+)</text>
        <dbReference type="Rhea" id="RHEA:17521"/>
        <dbReference type="Rhea" id="RHEA-COMP:9681"/>
        <dbReference type="Rhea" id="RHEA-COMP:9684"/>
        <dbReference type="ChEBI" id="CHEBI:15377"/>
        <dbReference type="ChEBI" id="CHEBI:15378"/>
        <dbReference type="ChEBI" id="CHEBI:29985"/>
        <dbReference type="ChEBI" id="CHEBI:30616"/>
        <dbReference type="ChEBI" id="CHEBI:43474"/>
        <dbReference type="ChEBI" id="CHEBI:58359"/>
        <dbReference type="ChEBI" id="CHEBI:78520"/>
        <dbReference type="ChEBI" id="CHEBI:78521"/>
        <dbReference type="ChEBI" id="CHEBI:456216"/>
    </reaction>
</comment>
<comment type="catalytic activity">
    <reaction evidence="1">
        <text>L-aspartyl-tRNA(Asn) + L-glutamine + ATP + H2O = L-asparaginyl-tRNA(Asn) + L-glutamate + ADP + phosphate + 2 H(+)</text>
        <dbReference type="Rhea" id="RHEA:14513"/>
        <dbReference type="Rhea" id="RHEA-COMP:9674"/>
        <dbReference type="Rhea" id="RHEA-COMP:9677"/>
        <dbReference type="ChEBI" id="CHEBI:15377"/>
        <dbReference type="ChEBI" id="CHEBI:15378"/>
        <dbReference type="ChEBI" id="CHEBI:29985"/>
        <dbReference type="ChEBI" id="CHEBI:30616"/>
        <dbReference type="ChEBI" id="CHEBI:43474"/>
        <dbReference type="ChEBI" id="CHEBI:58359"/>
        <dbReference type="ChEBI" id="CHEBI:78515"/>
        <dbReference type="ChEBI" id="CHEBI:78516"/>
        <dbReference type="ChEBI" id="CHEBI:456216"/>
    </reaction>
</comment>
<comment type="subunit">
    <text evidence="1">Heterotrimer of A, B and C subunits.</text>
</comment>
<comment type="similarity">
    <text evidence="1">Belongs to the GatC family.</text>
</comment>
<proteinExistence type="inferred from homology"/>
<reference key="1">
    <citation type="submission" date="2009-03" db="EMBL/GenBank/DDBJ databases">
        <title>Comparison of the complete genome sequences of Rhodococcus erythropolis PR4 and Rhodococcus opacus B4.</title>
        <authorList>
            <person name="Takarada H."/>
            <person name="Sekine M."/>
            <person name="Hosoyama A."/>
            <person name="Yamada R."/>
            <person name="Fujisawa T."/>
            <person name="Omata S."/>
            <person name="Shimizu A."/>
            <person name="Tsukatani N."/>
            <person name="Tanikawa S."/>
            <person name="Fujita N."/>
            <person name="Harayama S."/>
        </authorList>
    </citation>
    <scope>NUCLEOTIDE SEQUENCE [LARGE SCALE GENOMIC DNA]</scope>
    <source>
        <strain>B4</strain>
    </source>
</reference>
<sequence length="99" mass="10476">MPAISRDEVAHLARLSRLALTDAELDEFAGQLDSILSHVKVVTEVPAEDVPPMANPNAVTNVTRPDVIVPGLTPEQALSGAPAVEQDRFAVPQILGEGE</sequence>
<protein>
    <recommendedName>
        <fullName evidence="1">Aspartyl/glutamyl-tRNA(Asn/Gln) amidotransferase subunit C</fullName>
        <shortName evidence="1">Asp/Glu-ADT subunit C</shortName>
        <ecNumber evidence="1">6.3.5.-</ecNumber>
    </recommendedName>
</protein>
<organism>
    <name type="scientific">Rhodococcus opacus (strain B4)</name>
    <dbReference type="NCBI Taxonomy" id="632772"/>
    <lineage>
        <taxon>Bacteria</taxon>
        <taxon>Bacillati</taxon>
        <taxon>Actinomycetota</taxon>
        <taxon>Actinomycetes</taxon>
        <taxon>Mycobacteriales</taxon>
        <taxon>Nocardiaceae</taxon>
        <taxon>Rhodococcus</taxon>
    </lineage>
</organism>
<gene>
    <name evidence="1" type="primary">gatC</name>
    <name type="ordered locus">ROP_65260</name>
</gene>
<dbReference type="EC" id="6.3.5.-" evidence="1"/>
<dbReference type="EMBL" id="AP011115">
    <property type="protein sequence ID" value="BAH54773.1"/>
    <property type="molecule type" value="Genomic_DNA"/>
</dbReference>
<dbReference type="RefSeq" id="WP_005240352.1">
    <property type="nucleotide sequence ID" value="NC_012522.1"/>
</dbReference>
<dbReference type="SMR" id="C1B1S8"/>
<dbReference type="STRING" id="632772.ROP_65260"/>
<dbReference type="GeneID" id="69890864"/>
<dbReference type="KEGG" id="rop:ROP_65260"/>
<dbReference type="PATRIC" id="fig|632772.20.peg.6810"/>
<dbReference type="HOGENOM" id="CLU_105899_1_0_11"/>
<dbReference type="OrthoDB" id="5295223at2"/>
<dbReference type="Proteomes" id="UP000002212">
    <property type="component" value="Chromosome"/>
</dbReference>
<dbReference type="GO" id="GO:0050566">
    <property type="term" value="F:asparaginyl-tRNA synthase (glutamine-hydrolyzing) activity"/>
    <property type="evidence" value="ECO:0007669"/>
    <property type="project" value="RHEA"/>
</dbReference>
<dbReference type="GO" id="GO:0005524">
    <property type="term" value="F:ATP binding"/>
    <property type="evidence" value="ECO:0007669"/>
    <property type="project" value="UniProtKB-KW"/>
</dbReference>
<dbReference type="GO" id="GO:0050567">
    <property type="term" value="F:glutaminyl-tRNA synthase (glutamine-hydrolyzing) activity"/>
    <property type="evidence" value="ECO:0007669"/>
    <property type="project" value="UniProtKB-UniRule"/>
</dbReference>
<dbReference type="GO" id="GO:0070681">
    <property type="term" value="P:glutaminyl-tRNAGln biosynthesis via transamidation"/>
    <property type="evidence" value="ECO:0007669"/>
    <property type="project" value="TreeGrafter"/>
</dbReference>
<dbReference type="GO" id="GO:0006450">
    <property type="term" value="P:regulation of translational fidelity"/>
    <property type="evidence" value="ECO:0007669"/>
    <property type="project" value="InterPro"/>
</dbReference>
<dbReference type="GO" id="GO:0006412">
    <property type="term" value="P:translation"/>
    <property type="evidence" value="ECO:0007669"/>
    <property type="project" value="UniProtKB-UniRule"/>
</dbReference>
<dbReference type="Gene3D" id="1.10.20.60">
    <property type="entry name" value="Glu-tRNAGln amidotransferase C subunit, N-terminal domain"/>
    <property type="match status" value="1"/>
</dbReference>
<dbReference type="HAMAP" id="MF_00122">
    <property type="entry name" value="GatC"/>
    <property type="match status" value="1"/>
</dbReference>
<dbReference type="InterPro" id="IPR036113">
    <property type="entry name" value="Asp/Glu-ADT_sf_sub_c"/>
</dbReference>
<dbReference type="InterPro" id="IPR003837">
    <property type="entry name" value="GatC"/>
</dbReference>
<dbReference type="NCBIfam" id="TIGR00135">
    <property type="entry name" value="gatC"/>
    <property type="match status" value="1"/>
</dbReference>
<dbReference type="PANTHER" id="PTHR15004">
    <property type="entry name" value="GLUTAMYL-TRNA(GLN) AMIDOTRANSFERASE SUBUNIT C, MITOCHONDRIAL"/>
    <property type="match status" value="1"/>
</dbReference>
<dbReference type="PANTHER" id="PTHR15004:SF0">
    <property type="entry name" value="GLUTAMYL-TRNA(GLN) AMIDOTRANSFERASE SUBUNIT C, MITOCHONDRIAL"/>
    <property type="match status" value="1"/>
</dbReference>
<dbReference type="Pfam" id="PF02686">
    <property type="entry name" value="GatC"/>
    <property type="match status" value="1"/>
</dbReference>
<dbReference type="SUPFAM" id="SSF141000">
    <property type="entry name" value="Glu-tRNAGln amidotransferase C subunit"/>
    <property type="match status" value="1"/>
</dbReference>
<feature type="chain" id="PRO_1000122580" description="Aspartyl/glutamyl-tRNA(Asn/Gln) amidotransferase subunit C">
    <location>
        <begin position="1"/>
        <end position="99"/>
    </location>
</feature>
<accession>C1B1S8</accession>
<evidence type="ECO:0000255" key="1">
    <source>
        <dbReference type="HAMAP-Rule" id="MF_00122"/>
    </source>
</evidence>